<keyword id="KW-0963">Cytoplasm</keyword>
<keyword id="KW-0275">Fatty acid biosynthesis</keyword>
<keyword id="KW-0276">Fatty acid metabolism</keyword>
<keyword id="KW-0444">Lipid biosynthesis</keyword>
<keyword id="KW-0443">Lipid metabolism</keyword>
<keyword id="KW-0460">Magnesium</keyword>
<keyword id="KW-0479">Metal-binding</keyword>
<keyword id="KW-0808">Transferase</keyword>
<name>ACPS_SHIF8</name>
<protein>
    <recommendedName>
        <fullName evidence="1">Holo-[acyl-carrier-protein] synthase</fullName>
        <shortName evidence="1">Holo-ACP synthase</shortName>
        <ecNumber evidence="1">2.7.8.7</ecNumber>
    </recommendedName>
    <alternativeName>
        <fullName evidence="1">4'-phosphopantetheinyl transferase AcpS</fullName>
    </alternativeName>
</protein>
<organism>
    <name type="scientific">Shigella flexneri serotype 5b (strain 8401)</name>
    <dbReference type="NCBI Taxonomy" id="373384"/>
    <lineage>
        <taxon>Bacteria</taxon>
        <taxon>Pseudomonadati</taxon>
        <taxon>Pseudomonadota</taxon>
        <taxon>Gammaproteobacteria</taxon>
        <taxon>Enterobacterales</taxon>
        <taxon>Enterobacteriaceae</taxon>
        <taxon>Shigella</taxon>
    </lineage>
</organism>
<sequence>MAILGLGTDIVEIARIEAVIARSGERLARRVLSDNEWAIWKTHHQPVRFLAKRFAVKEAAAKAFGTGIRNGLAFNQFEVFNDELGKPRLRLWGEALKLAEKLGVVNMHVTLADERHYACATVIIES</sequence>
<gene>
    <name evidence="1" type="primary">acpS</name>
    <name type="ordered locus">SFV_2626</name>
</gene>
<evidence type="ECO:0000255" key="1">
    <source>
        <dbReference type="HAMAP-Rule" id="MF_00101"/>
    </source>
</evidence>
<proteinExistence type="inferred from homology"/>
<dbReference type="EC" id="2.7.8.7" evidence="1"/>
<dbReference type="EMBL" id="CP000266">
    <property type="protein sequence ID" value="ABF04723.1"/>
    <property type="molecule type" value="Genomic_DNA"/>
</dbReference>
<dbReference type="RefSeq" id="WP_000986029.1">
    <property type="nucleotide sequence ID" value="NC_008258.1"/>
</dbReference>
<dbReference type="SMR" id="Q0T1U2"/>
<dbReference type="GeneID" id="93774528"/>
<dbReference type="KEGG" id="sfv:SFV_2626"/>
<dbReference type="HOGENOM" id="CLU_089696_3_1_6"/>
<dbReference type="Proteomes" id="UP000000659">
    <property type="component" value="Chromosome"/>
</dbReference>
<dbReference type="GO" id="GO:0005737">
    <property type="term" value="C:cytoplasm"/>
    <property type="evidence" value="ECO:0007669"/>
    <property type="project" value="UniProtKB-SubCell"/>
</dbReference>
<dbReference type="GO" id="GO:0008897">
    <property type="term" value="F:holo-[acyl-carrier-protein] synthase activity"/>
    <property type="evidence" value="ECO:0007669"/>
    <property type="project" value="UniProtKB-UniRule"/>
</dbReference>
<dbReference type="GO" id="GO:0000287">
    <property type="term" value="F:magnesium ion binding"/>
    <property type="evidence" value="ECO:0007669"/>
    <property type="project" value="UniProtKB-UniRule"/>
</dbReference>
<dbReference type="GO" id="GO:0006633">
    <property type="term" value="P:fatty acid biosynthetic process"/>
    <property type="evidence" value="ECO:0007669"/>
    <property type="project" value="UniProtKB-UniRule"/>
</dbReference>
<dbReference type="FunFam" id="3.90.470.20:FF:000001">
    <property type="entry name" value="Holo-[acyl-carrier-protein] synthase"/>
    <property type="match status" value="1"/>
</dbReference>
<dbReference type="Gene3D" id="3.90.470.20">
    <property type="entry name" value="4'-phosphopantetheinyl transferase domain"/>
    <property type="match status" value="1"/>
</dbReference>
<dbReference type="HAMAP" id="MF_00101">
    <property type="entry name" value="AcpS"/>
    <property type="match status" value="1"/>
</dbReference>
<dbReference type="InterPro" id="IPR008278">
    <property type="entry name" value="4-PPantetheinyl_Trfase_dom"/>
</dbReference>
<dbReference type="InterPro" id="IPR037143">
    <property type="entry name" value="4-PPantetheinyl_Trfase_dom_sf"/>
</dbReference>
<dbReference type="InterPro" id="IPR002582">
    <property type="entry name" value="ACPS"/>
</dbReference>
<dbReference type="InterPro" id="IPR004568">
    <property type="entry name" value="Ppantetheine-prot_Trfase_dom"/>
</dbReference>
<dbReference type="NCBIfam" id="TIGR00516">
    <property type="entry name" value="acpS"/>
    <property type="match status" value="1"/>
</dbReference>
<dbReference type="NCBIfam" id="TIGR00556">
    <property type="entry name" value="pantethn_trn"/>
    <property type="match status" value="1"/>
</dbReference>
<dbReference type="Pfam" id="PF01648">
    <property type="entry name" value="ACPS"/>
    <property type="match status" value="1"/>
</dbReference>
<dbReference type="SUPFAM" id="SSF56214">
    <property type="entry name" value="4'-phosphopantetheinyl transferase"/>
    <property type="match status" value="1"/>
</dbReference>
<comment type="function">
    <text evidence="1">Transfers the 4'-phosphopantetheine moiety from coenzyme A to a Ser of acyl-carrier-protein.</text>
</comment>
<comment type="catalytic activity">
    <reaction evidence="1">
        <text>apo-[ACP] + CoA = holo-[ACP] + adenosine 3',5'-bisphosphate + H(+)</text>
        <dbReference type="Rhea" id="RHEA:12068"/>
        <dbReference type="Rhea" id="RHEA-COMP:9685"/>
        <dbReference type="Rhea" id="RHEA-COMP:9690"/>
        <dbReference type="ChEBI" id="CHEBI:15378"/>
        <dbReference type="ChEBI" id="CHEBI:29999"/>
        <dbReference type="ChEBI" id="CHEBI:57287"/>
        <dbReference type="ChEBI" id="CHEBI:58343"/>
        <dbReference type="ChEBI" id="CHEBI:64479"/>
        <dbReference type="EC" id="2.7.8.7"/>
    </reaction>
</comment>
<comment type="cofactor">
    <cofactor evidence="1">
        <name>Mg(2+)</name>
        <dbReference type="ChEBI" id="CHEBI:18420"/>
    </cofactor>
</comment>
<comment type="subcellular location">
    <subcellularLocation>
        <location evidence="1">Cytoplasm</location>
    </subcellularLocation>
</comment>
<comment type="similarity">
    <text evidence="1">Belongs to the P-Pant transferase superfamily. AcpS family.</text>
</comment>
<feature type="chain" id="PRO_1000008500" description="Holo-[acyl-carrier-protein] synthase">
    <location>
        <begin position="1"/>
        <end position="126"/>
    </location>
</feature>
<feature type="binding site" evidence="1">
    <location>
        <position position="9"/>
    </location>
    <ligand>
        <name>Mg(2+)</name>
        <dbReference type="ChEBI" id="CHEBI:18420"/>
    </ligand>
</feature>
<feature type="binding site" evidence="1">
    <location>
        <position position="58"/>
    </location>
    <ligand>
        <name>Mg(2+)</name>
        <dbReference type="ChEBI" id="CHEBI:18420"/>
    </ligand>
</feature>
<reference key="1">
    <citation type="journal article" date="2006" name="BMC Genomics">
        <title>Complete genome sequence of Shigella flexneri 5b and comparison with Shigella flexneri 2a.</title>
        <authorList>
            <person name="Nie H."/>
            <person name="Yang F."/>
            <person name="Zhang X."/>
            <person name="Yang J."/>
            <person name="Chen L."/>
            <person name="Wang J."/>
            <person name="Xiong Z."/>
            <person name="Peng J."/>
            <person name="Sun L."/>
            <person name="Dong J."/>
            <person name="Xue Y."/>
            <person name="Xu X."/>
            <person name="Chen S."/>
            <person name="Yao Z."/>
            <person name="Shen Y."/>
            <person name="Jin Q."/>
        </authorList>
    </citation>
    <scope>NUCLEOTIDE SEQUENCE [LARGE SCALE GENOMIC DNA]</scope>
    <source>
        <strain>8401</strain>
    </source>
</reference>
<accession>Q0T1U2</accession>